<gene>
    <name evidence="1" type="primary">adk</name>
    <name type="ordered locus">TTHA1671</name>
</gene>
<protein>
    <recommendedName>
        <fullName evidence="1">Adenylate kinase</fullName>
        <shortName evidence="1">AK</shortName>
        <ecNumber evidence="1">2.7.4.3</ecNumber>
    </recommendedName>
    <alternativeName>
        <fullName evidence="1">ATP-AMP transphosphorylase</fullName>
    </alternativeName>
    <alternativeName>
        <fullName evidence="1">ATP:AMP phosphotransferase</fullName>
    </alternativeName>
    <alternativeName>
        <fullName evidence="1">Adenylate monophosphate kinase</fullName>
    </alternativeName>
</protein>
<accession>Q5SHQ9</accession>
<feature type="chain" id="PRO_1000058930" description="Adenylate kinase">
    <location>
        <begin position="1"/>
        <end position="186"/>
    </location>
</feature>
<feature type="region of interest" description="NMP" evidence="1 2">
    <location>
        <begin position="34"/>
        <end position="63"/>
    </location>
</feature>
<feature type="region of interest" description="LID" evidence="1 2">
    <location>
        <begin position="125"/>
        <end position="135"/>
    </location>
</feature>
<feature type="binding site" evidence="1">
    <location>
        <begin position="14"/>
        <end position="19"/>
    </location>
    <ligand>
        <name>ATP</name>
        <dbReference type="ChEBI" id="CHEBI:30616"/>
    </ligand>
</feature>
<feature type="binding site" evidence="1">
    <location>
        <position position="35"/>
    </location>
    <ligand>
        <name>AMP</name>
        <dbReference type="ChEBI" id="CHEBI:456215"/>
    </ligand>
</feature>
<feature type="binding site" evidence="1">
    <location>
        <position position="40"/>
    </location>
    <ligand>
        <name>AMP</name>
        <dbReference type="ChEBI" id="CHEBI:456215"/>
    </ligand>
</feature>
<feature type="binding site" evidence="1">
    <location>
        <begin position="61"/>
        <end position="63"/>
    </location>
    <ligand>
        <name>AMP</name>
        <dbReference type="ChEBI" id="CHEBI:456215"/>
    </ligand>
</feature>
<feature type="binding site" evidence="1">
    <location>
        <begin position="84"/>
        <end position="87"/>
    </location>
    <ligand>
        <name>AMP</name>
        <dbReference type="ChEBI" id="CHEBI:456215"/>
    </ligand>
</feature>
<feature type="binding site" evidence="1">
    <location>
        <position position="91"/>
    </location>
    <ligand>
        <name>AMP</name>
        <dbReference type="ChEBI" id="CHEBI:456215"/>
    </ligand>
</feature>
<feature type="binding site" evidence="1">
    <location>
        <position position="126"/>
    </location>
    <ligand>
        <name>ATP</name>
        <dbReference type="ChEBI" id="CHEBI:30616"/>
    </ligand>
</feature>
<feature type="binding site" evidence="1">
    <location>
        <position position="132"/>
    </location>
    <ligand>
        <name>AMP</name>
        <dbReference type="ChEBI" id="CHEBI:456215"/>
    </ligand>
</feature>
<feature type="binding site" evidence="1">
    <location>
        <position position="143"/>
    </location>
    <ligand>
        <name>AMP</name>
        <dbReference type="ChEBI" id="CHEBI:456215"/>
    </ligand>
</feature>
<feature type="binding site" evidence="1">
    <location>
        <position position="171"/>
    </location>
    <ligand>
        <name>ATP</name>
        <dbReference type="ChEBI" id="CHEBI:30616"/>
    </ligand>
</feature>
<feature type="strand" evidence="4">
    <location>
        <begin position="4"/>
        <end position="10"/>
    </location>
</feature>
<feature type="helix" evidence="4">
    <location>
        <begin position="17"/>
        <end position="28"/>
    </location>
</feature>
<feature type="strand" evidence="4">
    <location>
        <begin position="31"/>
        <end position="33"/>
    </location>
</feature>
<feature type="helix" evidence="4">
    <location>
        <begin position="35"/>
        <end position="44"/>
    </location>
</feature>
<feature type="helix" evidence="4">
    <location>
        <begin position="48"/>
        <end position="58"/>
    </location>
</feature>
<feature type="helix" evidence="4">
    <location>
        <begin position="65"/>
        <end position="75"/>
    </location>
</feature>
<feature type="strand" evidence="4">
    <location>
        <begin position="78"/>
        <end position="84"/>
    </location>
</feature>
<feature type="helix" evidence="4">
    <location>
        <begin position="89"/>
        <end position="101"/>
    </location>
</feature>
<feature type="strand" evidence="4">
    <location>
        <begin position="104"/>
        <end position="113"/>
    </location>
</feature>
<feature type="helix" evidence="4">
    <location>
        <begin position="116"/>
        <end position="130"/>
    </location>
</feature>
<feature type="helix" evidence="4">
    <location>
        <begin position="137"/>
        <end position="160"/>
    </location>
</feature>
<feature type="strand" evidence="4">
    <location>
        <begin position="164"/>
        <end position="168"/>
    </location>
</feature>
<feature type="helix" evidence="4">
    <location>
        <begin position="173"/>
        <end position="184"/>
    </location>
</feature>
<organism>
    <name type="scientific">Thermus thermophilus (strain ATCC 27634 / DSM 579 / HB8)</name>
    <dbReference type="NCBI Taxonomy" id="300852"/>
    <lineage>
        <taxon>Bacteria</taxon>
        <taxon>Thermotogati</taxon>
        <taxon>Deinococcota</taxon>
        <taxon>Deinococci</taxon>
        <taxon>Thermales</taxon>
        <taxon>Thermaceae</taxon>
        <taxon>Thermus</taxon>
    </lineage>
</organism>
<reference key="1">
    <citation type="submission" date="2004-11" db="EMBL/GenBank/DDBJ databases">
        <title>Complete genome sequence of Thermus thermophilus HB8.</title>
        <authorList>
            <person name="Masui R."/>
            <person name="Kurokawa K."/>
            <person name="Nakagawa N."/>
            <person name="Tokunaga F."/>
            <person name="Koyama Y."/>
            <person name="Shibata T."/>
            <person name="Oshima T."/>
            <person name="Yokoyama S."/>
            <person name="Yasunaga T."/>
            <person name="Kuramitsu S."/>
        </authorList>
    </citation>
    <scope>NUCLEOTIDE SEQUENCE [LARGE SCALE GENOMIC DNA]</scope>
    <source>
        <strain>ATCC 27634 / DSM 579 / HB8</strain>
    </source>
</reference>
<reference key="2">
    <citation type="submission" date="2008-03" db="PDB data bank">
        <title>Crystal structure of adenylate kinase from Thermus thermophilus HB8.</title>
        <authorList>
            <person name="Nakagawa N."/>
            <person name="Kondo N."/>
            <person name="Masui R."/>
            <person name="Yokoyama S."/>
            <person name="Kuramitsu S."/>
        </authorList>
    </citation>
    <scope>X-RAY CRYSTALLOGRAPHY (1.80 ANGSTROMS)</scope>
</reference>
<keyword id="KW-0002">3D-structure</keyword>
<keyword id="KW-0067">ATP-binding</keyword>
<keyword id="KW-0963">Cytoplasm</keyword>
<keyword id="KW-0418">Kinase</keyword>
<keyword id="KW-0545">Nucleotide biosynthesis</keyword>
<keyword id="KW-0547">Nucleotide-binding</keyword>
<keyword id="KW-1185">Reference proteome</keyword>
<keyword id="KW-0808">Transferase</keyword>
<comment type="function">
    <text evidence="1">Catalyzes the reversible transfer of the terminal phosphate group between ATP and AMP. Plays an important role in cellular energy homeostasis and in adenine nucleotide metabolism.</text>
</comment>
<comment type="catalytic activity">
    <reaction evidence="1">
        <text>AMP + ATP = 2 ADP</text>
        <dbReference type="Rhea" id="RHEA:12973"/>
        <dbReference type="ChEBI" id="CHEBI:30616"/>
        <dbReference type="ChEBI" id="CHEBI:456215"/>
        <dbReference type="ChEBI" id="CHEBI:456216"/>
        <dbReference type="EC" id="2.7.4.3"/>
    </reaction>
</comment>
<comment type="pathway">
    <text evidence="1">Purine metabolism; AMP biosynthesis via salvage pathway; AMP from ADP: step 1/1.</text>
</comment>
<comment type="subunit">
    <text evidence="1">Monomer.</text>
</comment>
<comment type="subcellular location">
    <subcellularLocation>
        <location evidence="1">Cytoplasm</location>
    </subcellularLocation>
</comment>
<comment type="domain">
    <text evidence="1 3">Consists of three domains, a large central CORE domain and two small peripheral domains, NMPbind and LID, which undergo movements during catalysis. The LID domain closes over the site of phosphoryl transfer upon ATP binding. Assembling and dissambling the active center during each catalytic cycle provides an effective means to prevent ATP hydrolysis.</text>
</comment>
<comment type="similarity">
    <text evidence="1">Belongs to the adenylate kinase family.</text>
</comment>
<proteinExistence type="evidence at protein level"/>
<sequence>MDVGQAVIFLGPPGAGKGTQASRLAQELGFKKLSTGDILRDHVARGTPLGERVRPIMERGDLVPDDLILELIREELAERVIFDGFPRTLAQAEALDRLLSETGTRLLGVVLVEVPEEELVRRILRRAELEGRSDDNEETVRRRLEVYREKTEPLVGYYEARGVLKRVDGLGTPDEVYARIRAALGI</sequence>
<evidence type="ECO:0000255" key="1">
    <source>
        <dbReference type="HAMAP-Rule" id="MF_00235"/>
    </source>
</evidence>
<evidence type="ECO:0000269" key="2">
    <source ref="2"/>
</evidence>
<evidence type="ECO:0000305" key="3">
    <source ref="2"/>
</evidence>
<evidence type="ECO:0007829" key="4">
    <source>
        <dbReference type="PDB" id="3CM0"/>
    </source>
</evidence>
<name>KAD_THET8</name>
<dbReference type="EC" id="2.7.4.3" evidence="1"/>
<dbReference type="EMBL" id="AP008226">
    <property type="protein sequence ID" value="BAD71494.1"/>
    <property type="molecule type" value="Genomic_DNA"/>
</dbReference>
<dbReference type="RefSeq" id="WP_011173701.1">
    <property type="nucleotide sequence ID" value="NC_006461.1"/>
</dbReference>
<dbReference type="RefSeq" id="YP_144937.1">
    <property type="nucleotide sequence ID" value="NC_006461.1"/>
</dbReference>
<dbReference type="PDB" id="3CM0">
    <property type="method" value="X-ray"/>
    <property type="resolution" value="1.80 A"/>
    <property type="chains" value="A=1-186"/>
</dbReference>
<dbReference type="PDBsum" id="3CM0"/>
<dbReference type="SMR" id="Q5SHQ9"/>
<dbReference type="EnsemblBacteria" id="BAD71494">
    <property type="protein sequence ID" value="BAD71494"/>
    <property type="gene ID" value="BAD71494"/>
</dbReference>
<dbReference type="GeneID" id="3169825"/>
<dbReference type="KEGG" id="ttj:TTHA1671"/>
<dbReference type="PATRIC" id="fig|300852.9.peg.1641"/>
<dbReference type="eggNOG" id="COG0563">
    <property type="taxonomic scope" value="Bacteria"/>
</dbReference>
<dbReference type="HOGENOM" id="CLU_032354_4_1_0"/>
<dbReference type="PhylomeDB" id="Q5SHQ9"/>
<dbReference type="UniPathway" id="UPA00588">
    <property type="reaction ID" value="UER00649"/>
</dbReference>
<dbReference type="EvolutionaryTrace" id="Q5SHQ9"/>
<dbReference type="Proteomes" id="UP000000532">
    <property type="component" value="Chromosome"/>
</dbReference>
<dbReference type="GO" id="GO:0005737">
    <property type="term" value="C:cytoplasm"/>
    <property type="evidence" value="ECO:0007669"/>
    <property type="project" value="UniProtKB-SubCell"/>
</dbReference>
<dbReference type="GO" id="GO:0004017">
    <property type="term" value="F:adenylate kinase activity"/>
    <property type="evidence" value="ECO:0007669"/>
    <property type="project" value="UniProtKB-UniRule"/>
</dbReference>
<dbReference type="GO" id="GO:0005524">
    <property type="term" value="F:ATP binding"/>
    <property type="evidence" value="ECO:0007669"/>
    <property type="project" value="UniProtKB-UniRule"/>
</dbReference>
<dbReference type="GO" id="GO:0044209">
    <property type="term" value="P:AMP salvage"/>
    <property type="evidence" value="ECO:0007669"/>
    <property type="project" value="UniProtKB-UniRule"/>
</dbReference>
<dbReference type="CDD" id="cd01428">
    <property type="entry name" value="ADK"/>
    <property type="match status" value="1"/>
</dbReference>
<dbReference type="Gene3D" id="3.40.50.300">
    <property type="entry name" value="P-loop containing nucleotide triphosphate hydrolases"/>
    <property type="match status" value="1"/>
</dbReference>
<dbReference type="HAMAP" id="MF_00235">
    <property type="entry name" value="Adenylate_kinase_Adk"/>
    <property type="match status" value="1"/>
</dbReference>
<dbReference type="InterPro" id="IPR000850">
    <property type="entry name" value="Adenylat/UMP-CMP_kin"/>
</dbReference>
<dbReference type="InterPro" id="IPR033690">
    <property type="entry name" value="Adenylat_kinase_CS"/>
</dbReference>
<dbReference type="InterPro" id="IPR027417">
    <property type="entry name" value="P-loop_NTPase"/>
</dbReference>
<dbReference type="NCBIfam" id="NF001381">
    <property type="entry name" value="PRK00279.1-3"/>
    <property type="match status" value="1"/>
</dbReference>
<dbReference type="NCBIfam" id="NF011100">
    <property type="entry name" value="PRK14527.1"/>
    <property type="match status" value="1"/>
</dbReference>
<dbReference type="NCBIfam" id="NF011104">
    <property type="entry name" value="PRK14531.1"/>
    <property type="match status" value="1"/>
</dbReference>
<dbReference type="NCBIfam" id="NF011105">
    <property type="entry name" value="PRK14532.1"/>
    <property type="match status" value="1"/>
</dbReference>
<dbReference type="PANTHER" id="PTHR23359">
    <property type="entry name" value="NUCLEOTIDE KINASE"/>
    <property type="match status" value="1"/>
</dbReference>
<dbReference type="Pfam" id="PF00406">
    <property type="entry name" value="ADK"/>
    <property type="match status" value="1"/>
</dbReference>
<dbReference type="PRINTS" id="PR00094">
    <property type="entry name" value="ADENYLTKNASE"/>
</dbReference>
<dbReference type="SUPFAM" id="SSF52540">
    <property type="entry name" value="P-loop containing nucleoside triphosphate hydrolases"/>
    <property type="match status" value="1"/>
</dbReference>
<dbReference type="PROSITE" id="PS00113">
    <property type="entry name" value="ADENYLATE_KINASE"/>
    <property type="match status" value="1"/>
</dbReference>